<sequence>MRQTKTGILLANLGTPDAPTPEAVKRYLKQFLSDRRVVDTSRLLWWPLLRGVILPLRSPRVAKLYASVWMEGGSPLMVYSRQQQQALAQRLPEMPVALGMSYGSPSLESAVDELLAEHVDHIVVLPLYPQFSCSTVGAVWDELARILARKRSIPGISFIRDYADNHDYINALANSVRASFAKHGEPDLLLLSYHGIPQRYADEGDDYPQRCRTTTRELASALGMAPEKVMMTFQSRFGREPWLMPYTDETLKMLGEKGVGHIQVMCPGFAADCLETLEEIAEQNREVFLGAGGKKYEYIPALNATPEHIEMMANLVAAYR</sequence>
<feature type="chain" id="PRO_0000175138" description="Ferrochelatase">
    <location>
        <begin position="1"/>
        <end position="320"/>
    </location>
</feature>
<feature type="binding site" evidence="1">
    <location>
        <position position="194"/>
    </location>
    <ligand>
        <name>Fe cation</name>
        <dbReference type="ChEBI" id="CHEBI:24875"/>
    </ligand>
</feature>
<feature type="binding site" evidence="1">
    <location>
        <position position="275"/>
    </location>
    <ligand>
        <name>Fe cation</name>
        <dbReference type="ChEBI" id="CHEBI:24875"/>
    </ligand>
</feature>
<feature type="sequence conflict" description="In Ref. 1; BAA14304." evidence="3" ref="1">
    <original>L</original>
    <variation>F</variation>
    <location>
        <position position="54"/>
    </location>
</feature>
<evidence type="ECO:0000255" key="1">
    <source>
        <dbReference type="HAMAP-Rule" id="MF_00323"/>
    </source>
</evidence>
<evidence type="ECO:0000269" key="2">
    <source>
    </source>
</evidence>
<evidence type="ECO:0000305" key="3"/>
<keyword id="KW-0963">Cytoplasm</keyword>
<keyword id="KW-0903">Direct protein sequencing</keyword>
<keyword id="KW-0350">Heme biosynthesis</keyword>
<keyword id="KW-0408">Iron</keyword>
<keyword id="KW-0456">Lyase</keyword>
<keyword id="KW-0479">Metal-binding</keyword>
<keyword id="KW-0627">Porphyrin biosynthesis</keyword>
<keyword id="KW-1185">Reference proteome</keyword>
<gene>
    <name evidence="1" type="primary">hemH</name>
    <name type="synonym">popA</name>
    <name type="synonym">visA</name>
    <name type="ordered locus">b0475</name>
    <name type="ordered locus">JW0464</name>
</gene>
<reference key="1">
    <citation type="journal article" date="1991" name="J. Mol. Biol.">
        <title>Isolation and characterization of visible light-sensitive mutants of Escherichia coli K12.</title>
        <authorList>
            <person name="Miyamoto K."/>
            <person name="Nakahigashi K."/>
            <person name="Nishimura K."/>
            <person name="Inokuchi H."/>
        </authorList>
    </citation>
    <scope>NUCLEOTIDE SEQUENCE [GENOMIC DNA]</scope>
    <scope>DISRUPTION PHENOTYPE</scope>
    <source>
        <strain>K12</strain>
    </source>
</reference>
<reference key="2">
    <citation type="journal article" date="1994" name="J. Biochem.">
        <title>Overproduction, purification, and characterization of ferrochelatase from Escherichia coli.</title>
        <authorList>
            <person name="Miyamoto K."/>
            <person name="Kanaya S."/>
            <person name="Morikawa K."/>
            <person name="Inokuchi H."/>
        </authorList>
    </citation>
    <scope>NUCLEOTIDE SEQUENCE [GENOMIC DNA]</scope>
    <scope>PARTIAL PROTEIN SEQUENCE</scope>
    <scope>CHARACTERIZATION</scope>
</reference>
<reference key="3">
    <citation type="submission" date="1993-09" db="EMBL/GenBank/DDBJ databases">
        <authorList>
            <person name="Miyamoto K."/>
        </authorList>
    </citation>
    <scope>SEQUENCE REVISION TO 54</scope>
</reference>
<reference key="4">
    <citation type="submission" date="1997-01" db="EMBL/GenBank/DDBJ databases">
        <title>Sequence of minutes 4-25 of Escherichia coli.</title>
        <authorList>
            <person name="Chung E."/>
            <person name="Allen E."/>
            <person name="Araujo R."/>
            <person name="Aparicio A.M."/>
            <person name="Davis K."/>
            <person name="Duncan M."/>
            <person name="Federspiel N."/>
            <person name="Hyman R."/>
            <person name="Kalman S."/>
            <person name="Komp C."/>
            <person name="Kurdi O."/>
            <person name="Lew H."/>
            <person name="Lin D."/>
            <person name="Namath A."/>
            <person name="Oefner P."/>
            <person name="Roberts D."/>
            <person name="Schramm S."/>
            <person name="Davis R.W."/>
        </authorList>
    </citation>
    <scope>NUCLEOTIDE SEQUENCE [LARGE SCALE GENOMIC DNA]</scope>
    <source>
        <strain>K12 / MG1655 / ATCC 47076</strain>
    </source>
</reference>
<reference key="5">
    <citation type="journal article" date="1997" name="Science">
        <title>The complete genome sequence of Escherichia coli K-12.</title>
        <authorList>
            <person name="Blattner F.R."/>
            <person name="Plunkett G. III"/>
            <person name="Bloch C.A."/>
            <person name="Perna N.T."/>
            <person name="Burland V."/>
            <person name="Riley M."/>
            <person name="Collado-Vides J."/>
            <person name="Glasner J.D."/>
            <person name="Rode C.K."/>
            <person name="Mayhew G.F."/>
            <person name="Gregor J."/>
            <person name="Davis N.W."/>
            <person name="Kirkpatrick H.A."/>
            <person name="Goeden M.A."/>
            <person name="Rose D.J."/>
            <person name="Mau B."/>
            <person name="Shao Y."/>
        </authorList>
    </citation>
    <scope>NUCLEOTIDE SEQUENCE [LARGE SCALE GENOMIC DNA]</scope>
    <source>
        <strain>K12 / MG1655 / ATCC 47076</strain>
    </source>
</reference>
<reference key="6">
    <citation type="journal article" date="2006" name="Mol. Syst. Biol.">
        <title>Highly accurate genome sequences of Escherichia coli K-12 strains MG1655 and W3110.</title>
        <authorList>
            <person name="Hayashi K."/>
            <person name="Morooka N."/>
            <person name="Yamamoto Y."/>
            <person name="Fujita K."/>
            <person name="Isono K."/>
            <person name="Choi S."/>
            <person name="Ohtsubo E."/>
            <person name="Baba T."/>
            <person name="Wanner B.L."/>
            <person name="Mori H."/>
            <person name="Horiuchi T."/>
        </authorList>
    </citation>
    <scope>NUCLEOTIDE SEQUENCE [LARGE SCALE GENOMIC DNA]</scope>
    <source>
        <strain>K12 / W3110 / ATCC 27325 / DSM 5911</strain>
    </source>
</reference>
<reference key="7">
    <citation type="journal article" date="1993" name="J. Bacteriol.">
        <title>The Escherichia coli visA gene encodes ferrochelatase, the final enzyme of the heme biosynthetic pathway.</title>
        <authorList>
            <person name="Frustaci J.M."/>
            <person name="O'Brian M.R."/>
        </authorList>
    </citation>
    <scope>CHARACTERIZATION</scope>
</reference>
<dbReference type="EC" id="4.98.1.1" evidence="1"/>
<dbReference type="EMBL" id="D90259">
    <property type="protein sequence ID" value="BAA14304.1"/>
    <property type="molecule type" value="Genomic_DNA"/>
</dbReference>
<dbReference type="EMBL" id="U82664">
    <property type="protein sequence ID" value="AAB40229.1"/>
    <property type="molecule type" value="Genomic_DNA"/>
</dbReference>
<dbReference type="EMBL" id="U00096">
    <property type="protein sequence ID" value="AAC73577.1"/>
    <property type="molecule type" value="Genomic_DNA"/>
</dbReference>
<dbReference type="EMBL" id="AP009048">
    <property type="protein sequence ID" value="BAE76254.1"/>
    <property type="molecule type" value="Genomic_DNA"/>
</dbReference>
<dbReference type="PIR" id="B64778">
    <property type="entry name" value="B64778"/>
</dbReference>
<dbReference type="RefSeq" id="NP_415008.1">
    <property type="nucleotide sequence ID" value="NC_000913.3"/>
</dbReference>
<dbReference type="RefSeq" id="WP_001250103.1">
    <property type="nucleotide sequence ID" value="NZ_SSZK01000009.1"/>
</dbReference>
<dbReference type="SMR" id="P23871"/>
<dbReference type="BioGRID" id="4259849">
    <property type="interactions" value="15"/>
</dbReference>
<dbReference type="BioGRID" id="851849">
    <property type="interactions" value="1"/>
</dbReference>
<dbReference type="FunCoup" id="P23871">
    <property type="interactions" value="811"/>
</dbReference>
<dbReference type="IntAct" id="P23871">
    <property type="interactions" value="9"/>
</dbReference>
<dbReference type="STRING" id="511145.b0475"/>
<dbReference type="jPOST" id="P23871"/>
<dbReference type="PaxDb" id="511145-b0475"/>
<dbReference type="EnsemblBacteria" id="AAC73577">
    <property type="protein sequence ID" value="AAC73577"/>
    <property type="gene ID" value="b0475"/>
</dbReference>
<dbReference type="GeneID" id="947532"/>
<dbReference type="KEGG" id="ecj:JW0464"/>
<dbReference type="KEGG" id="eco:b0475"/>
<dbReference type="KEGG" id="ecoc:C3026_02335"/>
<dbReference type="PATRIC" id="fig|1411691.4.peg.1801"/>
<dbReference type="EchoBASE" id="EB0426"/>
<dbReference type="eggNOG" id="COG0276">
    <property type="taxonomic scope" value="Bacteria"/>
</dbReference>
<dbReference type="HOGENOM" id="CLU_018884_0_0_6"/>
<dbReference type="InParanoid" id="P23871"/>
<dbReference type="OMA" id="DPYHCEC"/>
<dbReference type="OrthoDB" id="9809741at2"/>
<dbReference type="PhylomeDB" id="P23871"/>
<dbReference type="BioCyc" id="EcoCyc:PROTOHEME-FERROCHELAT-MONOMER"/>
<dbReference type="BioCyc" id="MetaCyc:PROTOHEME-FERROCHELAT-MONOMER"/>
<dbReference type="UniPathway" id="UPA00252">
    <property type="reaction ID" value="UER00325"/>
</dbReference>
<dbReference type="PRO" id="PR:P23871"/>
<dbReference type="Proteomes" id="UP000000625">
    <property type="component" value="Chromosome"/>
</dbReference>
<dbReference type="GO" id="GO:0005737">
    <property type="term" value="C:cytoplasm"/>
    <property type="evidence" value="ECO:0007669"/>
    <property type="project" value="UniProtKB-SubCell"/>
</dbReference>
<dbReference type="GO" id="GO:0004325">
    <property type="term" value="F:ferrochelatase activity"/>
    <property type="evidence" value="ECO:0000314"/>
    <property type="project" value="EcoCyc"/>
</dbReference>
<dbReference type="GO" id="GO:0046872">
    <property type="term" value="F:metal ion binding"/>
    <property type="evidence" value="ECO:0007669"/>
    <property type="project" value="UniProtKB-KW"/>
</dbReference>
<dbReference type="GO" id="GO:0006783">
    <property type="term" value="P:heme biosynthetic process"/>
    <property type="evidence" value="ECO:0000314"/>
    <property type="project" value="EcoliWiki"/>
</dbReference>
<dbReference type="GO" id="GO:0046501">
    <property type="term" value="P:protoporphyrinogen IX metabolic process"/>
    <property type="evidence" value="ECO:0000315"/>
    <property type="project" value="EcoliWiki"/>
</dbReference>
<dbReference type="GO" id="GO:0009416">
    <property type="term" value="P:response to light stimulus"/>
    <property type="evidence" value="ECO:0000315"/>
    <property type="project" value="EcoliWiki"/>
</dbReference>
<dbReference type="CDD" id="cd00419">
    <property type="entry name" value="Ferrochelatase_C"/>
    <property type="match status" value="1"/>
</dbReference>
<dbReference type="CDD" id="cd03411">
    <property type="entry name" value="Ferrochelatase_N"/>
    <property type="match status" value="1"/>
</dbReference>
<dbReference type="FunFam" id="3.40.50.1400:FF:000004">
    <property type="entry name" value="Ferrochelatase"/>
    <property type="match status" value="1"/>
</dbReference>
<dbReference type="Gene3D" id="3.40.50.1400">
    <property type="match status" value="2"/>
</dbReference>
<dbReference type="HAMAP" id="MF_00323">
    <property type="entry name" value="Ferrochelatase"/>
    <property type="match status" value="1"/>
</dbReference>
<dbReference type="InterPro" id="IPR001015">
    <property type="entry name" value="Ferrochelatase"/>
</dbReference>
<dbReference type="InterPro" id="IPR019772">
    <property type="entry name" value="Ferrochelatase_AS"/>
</dbReference>
<dbReference type="InterPro" id="IPR033644">
    <property type="entry name" value="Ferrochelatase_C"/>
</dbReference>
<dbReference type="InterPro" id="IPR033659">
    <property type="entry name" value="Ferrochelatase_N"/>
</dbReference>
<dbReference type="NCBIfam" id="TIGR00109">
    <property type="entry name" value="hemH"/>
    <property type="match status" value="1"/>
</dbReference>
<dbReference type="PANTHER" id="PTHR11108">
    <property type="entry name" value="FERROCHELATASE"/>
    <property type="match status" value="1"/>
</dbReference>
<dbReference type="PANTHER" id="PTHR11108:SF1">
    <property type="entry name" value="FERROCHELATASE, MITOCHONDRIAL"/>
    <property type="match status" value="1"/>
</dbReference>
<dbReference type="Pfam" id="PF00762">
    <property type="entry name" value="Ferrochelatase"/>
    <property type="match status" value="1"/>
</dbReference>
<dbReference type="SUPFAM" id="SSF53800">
    <property type="entry name" value="Chelatase"/>
    <property type="match status" value="1"/>
</dbReference>
<dbReference type="PROSITE" id="PS00534">
    <property type="entry name" value="FERROCHELATASE"/>
    <property type="match status" value="1"/>
</dbReference>
<proteinExistence type="evidence at protein level"/>
<name>HEMH_ECOLI</name>
<protein>
    <recommendedName>
        <fullName evidence="1">Ferrochelatase</fullName>
        <ecNumber evidence="1">4.98.1.1</ecNumber>
    </recommendedName>
    <alternativeName>
        <fullName evidence="1">Heme synthase</fullName>
    </alternativeName>
    <alternativeName>
        <fullName evidence="1">Protoheme ferro-lyase</fullName>
    </alternativeName>
</protein>
<organism>
    <name type="scientific">Escherichia coli (strain K12)</name>
    <dbReference type="NCBI Taxonomy" id="83333"/>
    <lineage>
        <taxon>Bacteria</taxon>
        <taxon>Pseudomonadati</taxon>
        <taxon>Pseudomonadota</taxon>
        <taxon>Gammaproteobacteria</taxon>
        <taxon>Enterobacterales</taxon>
        <taxon>Enterobacteriaceae</taxon>
        <taxon>Escherichia</taxon>
    </lineage>
</organism>
<accession>P23871</accession>
<accession>P78232</accession>
<accession>Q2MBV2</accession>
<comment type="function">
    <text evidence="1">Catalyzes the ferrous insertion into protoporphyrin IX.</text>
</comment>
<comment type="catalytic activity">
    <reaction evidence="1">
        <text>heme b + 2 H(+) = protoporphyrin IX + Fe(2+)</text>
        <dbReference type="Rhea" id="RHEA:22584"/>
        <dbReference type="ChEBI" id="CHEBI:15378"/>
        <dbReference type="ChEBI" id="CHEBI:29033"/>
        <dbReference type="ChEBI" id="CHEBI:57306"/>
        <dbReference type="ChEBI" id="CHEBI:60344"/>
        <dbReference type="EC" id="4.98.1.1"/>
    </reaction>
</comment>
<comment type="pathway">
    <text evidence="1">Porphyrin-containing compound metabolism; protoheme biosynthesis; protoheme from protoporphyrin-IX: step 1/1.</text>
</comment>
<comment type="subunit">
    <text evidence="1">Monomer.</text>
</comment>
<comment type="subcellular location">
    <subcellularLocation>
        <location evidence="1">Cytoplasm</location>
    </subcellularLocation>
</comment>
<comment type="disruption phenotype">
    <text evidence="2">Cells are sensitive to visible light (which is lethal).</text>
</comment>
<comment type="similarity">
    <text evidence="1 3">Belongs to the ferrochelatase family.</text>
</comment>